<sequence length="784" mass="90173">MPRALWTAWVWAVIILSTEGASDQASSLSCDPTGVCDGHSRSLNSIPSGLTAGVKSLDLSNNEITYVSNRDLQRCVNLKTLRLGANEIHTVEEDSFFHLRNLEYLDLSYNRLSNLSSSWFRSLYVLKFLNLLGNLYKTLGETSLFSHLPNLRTLKVGNSNSFTEIHEKDFTGLTFLEELEISAQNLQIYVPKSLKSIQNISHLILHLKQPVLLVDILVDIVSSLDCLELRDTNLHTFHFSEASISEMSTSVKKLIFRNVQFTDESFVEVVKLFNYVSGILEVEFDDCTHDGIGDFRALSLDRIRHLGNVETLTIRKLHIPQFFLFQDLSSIYPLTGKVKRVTIENSKVFLVPCLLSQHLKSLEYLDLSENLMSEETLKNSACKDAWPFLQTLVLRQNRLKSLEKXGELLLTLENLNSLDISKNNFLSMPETCQWPGKMKQLNLSSTRIHSLTQCLPQTLEILDVSNNNLDSFSLILPQLKELYISRNKLKTLPDASFLPVLXVMRISRNIINTFSKEQLDSFQQLKTLEAGGNNFICSCDFLSFTQGQQALGRVLVDWPDDYHCDSPSHVRGQRVQDARLSLSECHRAAVVSAACCALFLLLLLMGVLCHRFHGLWYMKMMWAWLQAKRKPRKAPRRDICYDAFVSYSERDSYWVENLMVQELEQFNPPFKLCLHKRDFIPGKWIIDNIIDSIEKSHKTIFVLSENFVKSEWCKYELDFSHFRLFDENNDAAILILLEPIDKKAIPQRFCKLRKIMNTKTYLEWPVDETQQEGFWLNLRAAIRS</sequence>
<protein>
    <recommendedName>
        <fullName>Toll-like receptor 2</fullName>
    </recommendedName>
    <cdAntigenName>CD282</cdAntigenName>
</protein>
<reference key="1">
    <citation type="journal article" date="2008" name="Genomics">
        <title>Analysis of sequence variability and protein domain architectures for bovine peptidoglycan recognition protein 1 and Toll-like receptors 2 and 6.</title>
        <authorList>
            <person name="Seabury C.M."/>
            <person name="Womack J.E."/>
        </authorList>
    </citation>
    <scope>NUCLEOTIDE SEQUENCE [GENOMIC DNA]</scope>
    <scope>VARIANTS GLY-68; PHE-227 AND THR-605</scope>
    <source>
        <strain>Isolate 23</strain>
        <strain>Isolate 86</strain>
    </source>
</reference>
<reference key="2">
    <citation type="submission" date="2008-01" db="EMBL/GenBank/DDBJ databases">
        <title>Bos indicus Toll-like receptor 2.</title>
        <authorList>
            <person name="Tantia M.S."/>
            <person name="Mishra B."/>
            <person name="Bharani Kumar S.T."/>
            <person name="Vijh R.K."/>
        </authorList>
    </citation>
    <scope>NUCLEOTIDE SEQUENCE [GENOMIC DNA]</scope>
</reference>
<dbReference type="EMBL" id="EU746458">
    <property type="protein sequence ID" value="ACH92787.1"/>
    <property type="molecule type" value="Genomic_DNA"/>
</dbReference>
<dbReference type="EMBL" id="EU746461">
    <property type="protein sequence ID" value="ACH92790.1"/>
    <property type="molecule type" value="Genomic_DNA"/>
</dbReference>
<dbReference type="EMBL" id="EU413951">
    <property type="protein sequence ID" value="ABY90177.1"/>
    <property type="molecule type" value="Genomic_DNA"/>
</dbReference>
<dbReference type="GlyCosmos" id="B5T267">
    <property type="glycosylation" value="3 sites, No reported glycans"/>
</dbReference>
<dbReference type="GO" id="GO:0005794">
    <property type="term" value="C:Golgi apparatus"/>
    <property type="evidence" value="ECO:0000250"/>
    <property type="project" value="UniProtKB"/>
</dbReference>
<dbReference type="GO" id="GO:0045121">
    <property type="term" value="C:membrane raft"/>
    <property type="evidence" value="ECO:0000250"/>
    <property type="project" value="UniProtKB"/>
</dbReference>
<dbReference type="GO" id="GO:0030670">
    <property type="term" value="C:phagocytic vesicle membrane"/>
    <property type="evidence" value="ECO:0007669"/>
    <property type="project" value="UniProtKB-SubCell"/>
</dbReference>
<dbReference type="GO" id="GO:0005886">
    <property type="term" value="C:plasma membrane"/>
    <property type="evidence" value="ECO:0007669"/>
    <property type="project" value="TreeGrafter"/>
</dbReference>
<dbReference type="GO" id="GO:0043235">
    <property type="term" value="C:receptor complex"/>
    <property type="evidence" value="ECO:0007669"/>
    <property type="project" value="TreeGrafter"/>
</dbReference>
<dbReference type="GO" id="GO:0061809">
    <property type="term" value="F:NAD+ nucleosidase activity, cyclic ADP-ribose generating"/>
    <property type="evidence" value="ECO:0007669"/>
    <property type="project" value="UniProtKB-EC"/>
</dbReference>
<dbReference type="GO" id="GO:0004888">
    <property type="term" value="F:transmembrane signaling receptor activity"/>
    <property type="evidence" value="ECO:0007669"/>
    <property type="project" value="InterPro"/>
</dbReference>
<dbReference type="GO" id="GO:0042497">
    <property type="term" value="F:triacyl lipopeptide binding"/>
    <property type="evidence" value="ECO:0007669"/>
    <property type="project" value="TreeGrafter"/>
</dbReference>
<dbReference type="GO" id="GO:0071726">
    <property type="term" value="P:cellular response to diacyl bacterial lipopeptide"/>
    <property type="evidence" value="ECO:0000250"/>
    <property type="project" value="UniProtKB"/>
</dbReference>
<dbReference type="GO" id="GO:0071727">
    <property type="term" value="P:cellular response to triacyl bacterial lipopeptide"/>
    <property type="evidence" value="ECO:0000250"/>
    <property type="project" value="UniProtKB"/>
</dbReference>
<dbReference type="GO" id="GO:0006954">
    <property type="term" value="P:inflammatory response"/>
    <property type="evidence" value="ECO:0007669"/>
    <property type="project" value="UniProtKB-KW"/>
</dbReference>
<dbReference type="GO" id="GO:0045087">
    <property type="term" value="P:innate immune response"/>
    <property type="evidence" value="ECO:0007669"/>
    <property type="project" value="UniProtKB-KW"/>
</dbReference>
<dbReference type="GO" id="GO:0002224">
    <property type="term" value="P:toll-like receptor signaling pathway"/>
    <property type="evidence" value="ECO:0007669"/>
    <property type="project" value="InterPro"/>
</dbReference>
<dbReference type="FunFam" id="3.40.50.10140:FF:000001">
    <property type="entry name" value="Toll-like receptor 2"/>
    <property type="match status" value="1"/>
</dbReference>
<dbReference type="FunFam" id="3.80.10.10:FF:000046">
    <property type="entry name" value="Toll-like receptor 2"/>
    <property type="match status" value="1"/>
</dbReference>
<dbReference type="Gene3D" id="3.80.10.10">
    <property type="entry name" value="Ribonuclease Inhibitor"/>
    <property type="match status" value="1"/>
</dbReference>
<dbReference type="Gene3D" id="3.40.50.10140">
    <property type="entry name" value="Toll/interleukin-1 receptor homology (TIR) domain"/>
    <property type="match status" value="1"/>
</dbReference>
<dbReference type="InterPro" id="IPR000483">
    <property type="entry name" value="Cys-rich_flank_reg_C"/>
</dbReference>
<dbReference type="InterPro" id="IPR001611">
    <property type="entry name" value="Leu-rich_rpt"/>
</dbReference>
<dbReference type="InterPro" id="IPR003591">
    <property type="entry name" value="Leu-rich_rpt_typical-subtyp"/>
</dbReference>
<dbReference type="InterPro" id="IPR032675">
    <property type="entry name" value="LRR_dom_sf"/>
</dbReference>
<dbReference type="InterPro" id="IPR000157">
    <property type="entry name" value="TIR_dom"/>
</dbReference>
<dbReference type="InterPro" id="IPR017241">
    <property type="entry name" value="Toll-like_receptor"/>
</dbReference>
<dbReference type="InterPro" id="IPR035897">
    <property type="entry name" value="Toll_tir_struct_dom_sf"/>
</dbReference>
<dbReference type="PANTHER" id="PTHR24365">
    <property type="entry name" value="TOLL-LIKE RECEPTOR"/>
    <property type="match status" value="1"/>
</dbReference>
<dbReference type="PANTHER" id="PTHR24365:SF17">
    <property type="entry name" value="TOLL-LIKE RECEPTOR 2"/>
    <property type="match status" value="1"/>
</dbReference>
<dbReference type="Pfam" id="PF13855">
    <property type="entry name" value="LRR_8"/>
    <property type="match status" value="2"/>
</dbReference>
<dbReference type="Pfam" id="PF01582">
    <property type="entry name" value="TIR"/>
    <property type="match status" value="1"/>
</dbReference>
<dbReference type="PIRSF" id="PIRSF037595">
    <property type="entry name" value="Toll-like_receptor"/>
    <property type="match status" value="1"/>
</dbReference>
<dbReference type="PRINTS" id="PR01537">
    <property type="entry name" value="INTRLKN1R1F"/>
</dbReference>
<dbReference type="PRINTS" id="PR00019">
    <property type="entry name" value="LEURICHRPT"/>
</dbReference>
<dbReference type="SMART" id="SM00364">
    <property type="entry name" value="LRR_BAC"/>
    <property type="match status" value="5"/>
</dbReference>
<dbReference type="SMART" id="SM00365">
    <property type="entry name" value="LRR_SD22"/>
    <property type="match status" value="6"/>
</dbReference>
<dbReference type="SMART" id="SM00369">
    <property type="entry name" value="LRR_TYP"/>
    <property type="match status" value="7"/>
</dbReference>
<dbReference type="SMART" id="SM00082">
    <property type="entry name" value="LRRCT"/>
    <property type="match status" value="1"/>
</dbReference>
<dbReference type="SMART" id="SM00255">
    <property type="entry name" value="TIR"/>
    <property type="match status" value="1"/>
</dbReference>
<dbReference type="SUPFAM" id="SSF52058">
    <property type="entry name" value="L domain-like"/>
    <property type="match status" value="1"/>
</dbReference>
<dbReference type="SUPFAM" id="SSF52047">
    <property type="entry name" value="RNI-like"/>
    <property type="match status" value="1"/>
</dbReference>
<dbReference type="SUPFAM" id="SSF52200">
    <property type="entry name" value="Toll/Interleukin receptor TIR domain"/>
    <property type="match status" value="1"/>
</dbReference>
<dbReference type="PROSITE" id="PS51450">
    <property type="entry name" value="LRR"/>
    <property type="match status" value="11"/>
</dbReference>
<dbReference type="PROSITE" id="PS50104">
    <property type="entry name" value="TIR"/>
    <property type="match status" value="1"/>
</dbReference>
<comment type="function">
    <text evidence="3 4">Cooperates with LY96 to mediate the innate immune response to bacterial lipoproteins and other microbial cell wall components. Cooperates with TLR1 or TLR6 to mediate the innate immune response to bacterial lipoproteins or lipopeptides. Acts via MYD88 and TRAF6, leading to NF-kappa-B activation, cytokine secretion and the inflammatory response (By similarity). May also promote apoptosis in response to lipoproteins. Forms activation clusters composed of several receptors depending on the ligand, these clusters trigger signaling from the cell surface and subsequently are targeted to the Golgi in a lipid-raft dependent pathway. Forms the cluster TLR2:TLR6:CD14:CD36 in response to diacylated lipopeptides and TLR2:TLR1:CD14 in response to triacylated lipopeptides (By similarity).</text>
</comment>
<comment type="subunit">
    <text evidence="3 4">Interacts with LY96, TLR1 and TLR6 (via extracellular domain). TLR2 seems to exist in heterodimers with either TLR1 or TLR6 before stimulation by the ligand. The heterodimers form bigger oligomers in response to their corresponding ligands as well as further heterotypic associations with other receptors such as CD14 and/or CD36. Binds MYD88 (via TIR domain). Interacts with TICAM1. Interacts with CNPY3. Interacts with ATG16L1. Interacts with PPP1R11. Interacts with TICAM2. Interacts with TIRAP (By similarity).</text>
</comment>
<comment type="subcellular location">
    <subcellularLocation>
        <location evidence="4">Membrane</location>
        <topology evidence="5">Single-pass type I membrane protein</topology>
    </subcellularLocation>
    <subcellularLocation>
        <location evidence="4">Cytoplasmic vesicle</location>
        <location evidence="4">Phagosome membrane</location>
        <topology evidence="5">Single-pass type I membrane protein</topology>
    </subcellularLocation>
    <subcellularLocation>
        <location evidence="3">Membrane raft</location>
    </subcellularLocation>
    <text evidence="3">Does not reside in lipid rafts before stimulation but accumulates increasingly in the raft upon the presence of the microbial ligand. In response to diacylated lipoproteins, TLR2:TLR6 heterodimers are recruited in lipid rafts, this recruitment determine the intracellular targeting to the Golgi apparatus. Triacylated lipoproteins induce the same mechanism for TLR2:TLR1 heterodimers.</text>
</comment>
<comment type="domain">
    <text evidence="1">Ester-bound lipid substrates are bound through a crevice formed between the LRR 11 and LRR 12.</text>
</comment>
<comment type="domain">
    <text evidence="1">The ATG16L1-binding motif mediates interaction with ATG16L1.</text>
</comment>
<comment type="PTM">
    <text evidence="4">Ubiquitinated at Lys-754 by PPP1R11, leading to its degradation. Deubiquitinated by USP2.</text>
</comment>
<comment type="PTM">
    <text evidence="3">Glycosylation of Asn-442 is critical for secretion of the N-terminal ectodomain of TLR2.</text>
</comment>
<comment type="similarity">
    <text evidence="8">Belongs to the Toll-like receptor family.</text>
</comment>
<comment type="caution">
    <text evidence="2 8">In some plant proteins and in human SARM1, the TIR domain has NAD(+) hydrolase (NADase) activity (By similarity). However, despite the presence of the catalytic Asp residue, the isolated TIR domain of human TLR4 lacks NADase activity (By similarity). Based on this, it is unlikely that Toll-like receptors have NADase activity.</text>
</comment>
<evidence type="ECO:0000250" key="1"/>
<evidence type="ECO:0000250" key="2">
    <source>
        <dbReference type="UniProtKB" id="O00206"/>
    </source>
</evidence>
<evidence type="ECO:0000250" key="3">
    <source>
        <dbReference type="UniProtKB" id="O60603"/>
    </source>
</evidence>
<evidence type="ECO:0000250" key="4">
    <source>
        <dbReference type="UniProtKB" id="Q9QUN7"/>
    </source>
</evidence>
<evidence type="ECO:0000255" key="5"/>
<evidence type="ECO:0000255" key="6">
    <source>
        <dbReference type="PROSITE-ProRule" id="PRU00204"/>
    </source>
</evidence>
<evidence type="ECO:0000269" key="7">
    <source>
    </source>
</evidence>
<evidence type="ECO:0000305" key="8"/>
<accession>B5T267</accession>
<accession>B1A0T3</accession>
<accession>B5T264</accession>
<proteinExistence type="inferred from homology"/>
<gene>
    <name type="primary">TLR2</name>
</gene>
<feature type="signal peptide" evidence="5">
    <location>
        <begin position="1"/>
        <end position="20"/>
    </location>
</feature>
<feature type="chain" id="PRO_0000363767" description="Toll-like receptor 2">
    <location>
        <begin position="21"/>
        <end position="784"/>
    </location>
</feature>
<feature type="topological domain" description="Extracellular" evidence="5">
    <location>
        <begin position="21"/>
        <end position="587"/>
    </location>
</feature>
<feature type="transmembrane region" description="Helical" evidence="5">
    <location>
        <begin position="588"/>
        <end position="608"/>
    </location>
</feature>
<feature type="topological domain" description="Cytoplasmic" evidence="5">
    <location>
        <begin position="609"/>
        <end position="784"/>
    </location>
</feature>
<feature type="repeat" description="LRR 1">
    <location>
        <begin position="54"/>
        <end position="77"/>
    </location>
</feature>
<feature type="repeat" description="LRR 2">
    <location>
        <begin position="78"/>
        <end position="101"/>
    </location>
</feature>
<feature type="repeat" description="LRR 3">
    <location>
        <begin position="102"/>
        <end position="125"/>
    </location>
</feature>
<feature type="repeat" description="LRR 4">
    <location>
        <begin position="126"/>
        <end position="150"/>
    </location>
</feature>
<feature type="repeat" description="LRR 5">
    <location>
        <begin position="151"/>
        <end position="175"/>
    </location>
</feature>
<feature type="repeat" description="LRR 6">
    <location>
        <begin position="176"/>
        <end position="199"/>
    </location>
</feature>
<feature type="repeat" description="LRR 7">
    <location>
        <begin position="200"/>
        <end position="223"/>
    </location>
</feature>
<feature type="repeat" description="LRR 8">
    <location>
        <begin position="224"/>
        <end position="250"/>
    </location>
</feature>
<feature type="repeat" description="LRR 9">
    <location>
        <begin position="251"/>
        <end position="278"/>
    </location>
</feature>
<feature type="repeat" description="LRR 10">
    <location>
        <begin position="279"/>
        <end position="308"/>
    </location>
</feature>
<feature type="repeat" description="LRR 11">
    <location>
        <begin position="309"/>
        <end position="337"/>
    </location>
</feature>
<feature type="repeat" description="LRR 12">
    <location>
        <begin position="338"/>
        <end position="361"/>
    </location>
</feature>
<feature type="repeat" description="LRR 13">
    <location>
        <begin position="362"/>
        <end position="388"/>
    </location>
</feature>
<feature type="repeat" description="LRR 14">
    <location>
        <begin position="389"/>
        <end position="414"/>
    </location>
</feature>
<feature type="repeat" description="LRR 15">
    <location>
        <begin position="415"/>
        <end position="437"/>
    </location>
</feature>
<feature type="repeat" description="LRR 16">
    <location>
        <begin position="438"/>
        <end position="457"/>
    </location>
</feature>
<feature type="repeat" description="LRR 17">
    <location>
        <begin position="458"/>
        <end position="478"/>
    </location>
</feature>
<feature type="repeat" description="LRR 18">
    <location>
        <begin position="479"/>
        <end position="500"/>
    </location>
</feature>
<feature type="repeat" description="LRR 19">
    <location>
        <begin position="501"/>
        <end position="524"/>
    </location>
</feature>
<feature type="domain" description="LRRCT">
    <location>
        <begin position="525"/>
        <end position="579"/>
    </location>
</feature>
<feature type="domain" description="TIR" evidence="6">
    <location>
        <begin position="639"/>
        <end position="782"/>
    </location>
</feature>
<feature type="short sequence motif" description="ATG16L1-binding motif">
    <location>
        <begin position="761"/>
        <end position="778"/>
    </location>
</feature>
<feature type="site" description="Interaction with bacterial lipopeptide" evidence="1">
    <location>
        <position position="349"/>
    </location>
</feature>
<feature type="glycosylation site" description="N-linked (GlcNAc...) asparagine" evidence="5">
    <location>
        <position position="114"/>
    </location>
</feature>
<feature type="glycosylation site" description="N-linked (GlcNAc...) asparagine" evidence="5">
    <location>
        <position position="199"/>
    </location>
</feature>
<feature type="glycosylation site" description="N-linked (GlcNAc...) asparagine" evidence="5">
    <location>
        <position position="442"/>
    </location>
</feature>
<feature type="disulfide bond" evidence="1">
    <location>
        <begin position="30"/>
        <end position="36"/>
    </location>
</feature>
<feature type="disulfide bond" evidence="1">
    <location>
        <begin position="353"/>
        <end position="382"/>
    </location>
</feature>
<feature type="disulfide bond" evidence="1">
    <location>
        <begin position="432"/>
        <end position="454"/>
    </location>
</feature>
<feature type="cross-link" description="Glycyl lysine isopeptide (Lys-Gly) (interchain with G-Cter in ubiquitin)" evidence="3">
    <location>
        <position position="754"/>
    </location>
</feature>
<feature type="sequence variant" evidence="7">
    <original>S</original>
    <variation>G</variation>
    <location>
        <position position="68"/>
    </location>
</feature>
<feature type="sequence variant" evidence="7">
    <original>L</original>
    <variation>F</variation>
    <location>
        <position position="227"/>
    </location>
</feature>
<feature type="sequence variant" evidence="7">
    <original>M</original>
    <variation>T</variation>
    <location>
        <position position="605"/>
    </location>
</feature>
<feature type="sequence conflict" description="In Ref. 2; ABY90177." evidence="8" ref="2">
    <original>P</original>
    <variation>Q</variation>
    <location>
        <position position="149"/>
    </location>
</feature>
<feature type="sequence conflict" description="In Ref. 2; ABY90177." evidence="8" ref="2">
    <original>T</original>
    <variation>I</variation>
    <location>
        <position position="335"/>
    </location>
</feature>
<feature type="sequence conflict" description="In Ref. 2; ABY90177." evidence="8" ref="2">
    <original>N</original>
    <variation>S</variation>
    <location>
        <position position="345"/>
    </location>
</feature>
<organism>
    <name type="scientific">Bos indicus</name>
    <name type="common">Zebu</name>
    <dbReference type="NCBI Taxonomy" id="9915"/>
    <lineage>
        <taxon>Eukaryota</taxon>
        <taxon>Metazoa</taxon>
        <taxon>Chordata</taxon>
        <taxon>Craniata</taxon>
        <taxon>Vertebrata</taxon>
        <taxon>Euteleostomi</taxon>
        <taxon>Mammalia</taxon>
        <taxon>Eutheria</taxon>
        <taxon>Laurasiatheria</taxon>
        <taxon>Artiodactyla</taxon>
        <taxon>Ruminantia</taxon>
        <taxon>Pecora</taxon>
        <taxon>Bovidae</taxon>
        <taxon>Bovinae</taxon>
        <taxon>Bos</taxon>
    </lineage>
</organism>
<name>TLR2_BOSIN</name>
<keyword id="KW-0968">Cytoplasmic vesicle</keyword>
<keyword id="KW-1015">Disulfide bond</keyword>
<keyword id="KW-0325">Glycoprotein</keyword>
<keyword id="KW-0391">Immunity</keyword>
<keyword id="KW-0395">Inflammatory response</keyword>
<keyword id="KW-0399">Innate immunity</keyword>
<keyword id="KW-1017">Isopeptide bond</keyword>
<keyword id="KW-0433">Leucine-rich repeat</keyword>
<keyword id="KW-0472">Membrane</keyword>
<keyword id="KW-0520">NAD</keyword>
<keyword id="KW-0675">Receptor</keyword>
<keyword id="KW-0677">Repeat</keyword>
<keyword id="KW-0732">Signal</keyword>
<keyword id="KW-0812">Transmembrane</keyword>
<keyword id="KW-1133">Transmembrane helix</keyword>
<keyword id="KW-0832">Ubl conjugation</keyword>